<reference key="1">
    <citation type="journal article" date="2008" name="J. Bacteriol.">
        <title>Insights into the environmental resistance gene pool from the genome sequence of the multidrug-resistant environmental isolate Escherichia coli SMS-3-5.</title>
        <authorList>
            <person name="Fricke W.F."/>
            <person name="Wright M.S."/>
            <person name="Lindell A.H."/>
            <person name="Harkins D.M."/>
            <person name="Baker-Austin C."/>
            <person name="Ravel J."/>
            <person name="Stepanauskas R."/>
        </authorList>
    </citation>
    <scope>NUCLEOTIDE SEQUENCE [LARGE SCALE GENOMIC DNA]</scope>
    <source>
        <strain>SMS-3-5 / SECEC</strain>
    </source>
</reference>
<sequence length="296" mass="33091">MTKVGLRIDVDTFRGTREGVPRLLEILSKHNIQASIFFSVGPDNMGRHLWRLVKPQFLWKMLRSNAASLYGWDILLAGTAWPGKEIGHANADIIREAAKYHEVGLHAWDHHAWQAHSGNWDRQTMVDDIARGLRTLEEIIGQPITCSAAAGWRADQQVIEAKEGFHLRYNSDCRGVMPFRPLLDSGKPGTAQIPVTLPTWDEVIGRDVKAEDFNGWLLNRILRDKGTPVYTIHAEVEGCAYQHNFVDLLKRAAQEGVTFCPLSELLSGMLPLGQVVRGNIAGREGWLGCQQIAGSR</sequence>
<evidence type="ECO:0000255" key="1">
    <source>
        <dbReference type="HAMAP-Rule" id="MF_01870"/>
    </source>
</evidence>
<comment type="function">
    <text evidence="1">Catalyzes the deformylation of 4-deoxy-4-formamido-L-arabinose-phosphoundecaprenol to 4-amino-4-deoxy-L-arabinose-phosphoundecaprenol. The modified arabinose is attached to lipid A and is required for resistance to polymyxin and cationic antimicrobial peptides.</text>
</comment>
<comment type="catalytic activity">
    <reaction evidence="1">
        <text>4-deoxy-4-formamido-alpha-L-arabinopyranosyl di-trans,octa-cis-undecaprenyl phosphate + H2O = 4-amino-4-deoxy-alpha-L-arabinopyranosyl di-trans,octa-cis-undecaprenyl phosphate + formate</text>
        <dbReference type="Rhea" id="RHEA:27734"/>
        <dbReference type="ChEBI" id="CHEBI:15377"/>
        <dbReference type="ChEBI" id="CHEBI:15740"/>
        <dbReference type="ChEBI" id="CHEBI:58909"/>
        <dbReference type="ChEBI" id="CHEBI:60463"/>
        <dbReference type="EC" id="3.5.1.n3"/>
    </reaction>
</comment>
<comment type="pathway">
    <text evidence="1">Glycolipid biosynthesis; 4-amino-4-deoxy-alpha-L-arabinose undecaprenyl phosphate biosynthesis; 4-amino-4-deoxy-alpha-L-arabinose undecaprenyl phosphate from UDP-4-deoxy-4-formamido-beta-L-arabinose and undecaprenyl phosphate: step 2/2.</text>
</comment>
<comment type="pathway">
    <text evidence="1">Bacterial outer membrane biogenesis; lipopolysaccharide biosynthesis.</text>
</comment>
<comment type="similarity">
    <text evidence="1">Belongs to the polysaccharide deacetylase family. ArnD deformylase subfamily.</text>
</comment>
<organism>
    <name type="scientific">Escherichia coli (strain SMS-3-5 / SECEC)</name>
    <dbReference type="NCBI Taxonomy" id="439855"/>
    <lineage>
        <taxon>Bacteria</taxon>
        <taxon>Pseudomonadati</taxon>
        <taxon>Pseudomonadota</taxon>
        <taxon>Gammaproteobacteria</taxon>
        <taxon>Enterobacterales</taxon>
        <taxon>Enterobacteriaceae</taxon>
        <taxon>Escherichia</taxon>
    </lineage>
</organism>
<keyword id="KW-0046">Antibiotic resistance</keyword>
<keyword id="KW-0378">Hydrolase</keyword>
<keyword id="KW-0441">Lipid A biosynthesis</keyword>
<keyword id="KW-0444">Lipid biosynthesis</keyword>
<keyword id="KW-0443">Lipid metabolism</keyword>
<keyword id="KW-0448">Lipopolysaccharide biosynthesis</keyword>
<gene>
    <name evidence="1" type="primary">arnD</name>
    <name type="ordered locus">EcSMS35_2410</name>
</gene>
<dbReference type="EC" id="3.5.1.n3" evidence="1"/>
<dbReference type="EMBL" id="CP000970">
    <property type="protein sequence ID" value="ACB18410.1"/>
    <property type="molecule type" value="Genomic_DNA"/>
</dbReference>
<dbReference type="RefSeq" id="WP_000169739.1">
    <property type="nucleotide sequence ID" value="NC_010498.1"/>
</dbReference>
<dbReference type="SMR" id="B1LLL0"/>
<dbReference type="KEGG" id="ecm:EcSMS35_2410"/>
<dbReference type="HOGENOM" id="CLU_084199_0_0_6"/>
<dbReference type="UniPathway" id="UPA00030"/>
<dbReference type="UniPathway" id="UPA00036">
    <property type="reaction ID" value="UER00496"/>
</dbReference>
<dbReference type="Proteomes" id="UP000007011">
    <property type="component" value="Chromosome"/>
</dbReference>
<dbReference type="GO" id="GO:0016020">
    <property type="term" value="C:membrane"/>
    <property type="evidence" value="ECO:0007669"/>
    <property type="project" value="GOC"/>
</dbReference>
<dbReference type="GO" id="GO:0016811">
    <property type="term" value="F:hydrolase activity, acting on carbon-nitrogen (but not peptide) bonds, in linear amides"/>
    <property type="evidence" value="ECO:0007669"/>
    <property type="project" value="UniProtKB-UniRule"/>
</dbReference>
<dbReference type="GO" id="GO:0036108">
    <property type="term" value="P:4-amino-4-deoxy-alpha-L-arabinopyranosyl undecaprenyl phosphate biosynthetic process"/>
    <property type="evidence" value="ECO:0007669"/>
    <property type="project" value="UniProtKB-UniRule"/>
</dbReference>
<dbReference type="GO" id="GO:0009245">
    <property type="term" value="P:lipid A biosynthetic process"/>
    <property type="evidence" value="ECO:0007669"/>
    <property type="project" value="UniProtKB-UniRule"/>
</dbReference>
<dbReference type="GO" id="GO:0009103">
    <property type="term" value="P:lipopolysaccharide biosynthetic process"/>
    <property type="evidence" value="ECO:0007669"/>
    <property type="project" value="UniProtKB-UniRule"/>
</dbReference>
<dbReference type="GO" id="GO:0046677">
    <property type="term" value="P:response to antibiotic"/>
    <property type="evidence" value="ECO:0007669"/>
    <property type="project" value="UniProtKB-KW"/>
</dbReference>
<dbReference type="CDD" id="cd10939">
    <property type="entry name" value="CE4_ArnD"/>
    <property type="match status" value="1"/>
</dbReference>
<dbReference type="Gene3D" id="3.20.20.370">
    <property type="entry name" value="Glycoside hydrolase/deacetylase"/>
    <property type="match status" value="1"/>
</dbReference>
<dbReference type="HAMAP" id="MF_01870">
    <property type="entry name" value="ArnD"/>
    <property type="match status" value="1"/>
</dbReference>
<dbReference type="InterPro" id="IPR023557">
    <property type="entry name" value="ArnD"/>
</dbReference>
<dbReference type="InterPro" id="IPR011330">
    <property type="entry name" value="Glyco_hydro/deAcase_b/a-brl"/>
</dbReference>
<dbReference type="InterPro" id="IPR002509">
    <property type="entry name" value="NODB_dom"/>
</dbReference>
<dbReference type="InterPro" id="IPR050248">
    <property type="entry name" value="Polysacc_deacetylase_ArnD"/>
</dbReference>
<dbReference type="NCBIfam" id="NF011923">
    <property type="entry name" value="PRK15394.1"/>
    <property type="match status" value="1"/>
</dbReference>
<dbReference type="PANTHER" id="PTHR10587:SF137">
    <property type="entry name" value="4-DEOXY-4-FORMAMIDO-L-ARABINOSE-PHOSPHOUNDECAPRENOL DEFORMYLASE ARND-RELATED"/>
    <property type="match status" value="1"/>
</dbReference>
<dbReference type="PANTHER" id="PTHR10587">
    <property type="entry name" value="GLYCOSYL TRANSFERASE-RELATED"/>
    <property type="match status" value="1"/>
</dbReference>
<dbReference type="Pfam" id="PF01522">
    <property type="entry name" value="Polysacc_deac_1"/>
    <property type="match status" value="1"/>
</dbReference>
<dbReference type="SUPFAM" id="SSF88713">
    <property type="entry name" value="Glycoside hydrolase/deacetylase"/>
    <property type="match status" value="1"/>
</dbReference>
<dbReference type="PROSITE" id="PS51677">
    <property type="entry name" value="NODB"/>
    <property type="match status" value="1"/>
</dbReference>
<proteinExistence type="inferred from homology"/>
<accession>B1LLL0</accession>
<name>ARND_ECOSM</name>
<feature type="chain" id="PRO_0000383499" description="Probable 4-deoxy-4-formamido-L-arabinose-phosphoundecaprenol deformylase ArnD">
    <location>
        <begin position="1"/>
        <end position="296"/>
    </location>
</feature>
<feature type="domain" description="NodB homology" evidence="1">
    <location>
        <begin position="2"/>
        <end position="260"/>
    </location>
</feature>
<protein>
    <recommendedName>
        <fullName evidence="1">Probable 4-deoxy-4-formamido-L-arabinose-phosphoundecaprenol deformylase ArnD</fullName>
        <ecNumber evidence="1">3.5.1.n3</ecNumber>
    </recommendedName>
</protein>